<evidence type="ECO:0000250" key="1"/>
<evidence type="ECO:0000250" key="2">
    <source>
        <dbReference type="UniProtKB" id="O35789"/>
    </source>
</evidence>
<evidence type="ECO:0000255" key="3"/>
<evidence type="ECO:0000256" key="4">
    <source>
        <dbReference type="SAM" id="MobiDB-lite"/>
    </source>
</evidence>
<evidence type="ECO:0000305" key="5"/>
<feature type="chain" id="PRO_0000195171" description="Galactosylgalactosylxylosylprotein 3-beta-glucuronosyltransferase 2">
    <location>
        <begin position="1"/>
        <end position="329"/>
    </location>
</feature>
<feature type="topological domain" description="Cytoplasmic" evidence="3">
    <location>
        <begin position="1"/>
        <end position="2"/>
    </location>
</feature>
<feature type="transmembrane region" description="Helical; Signal-anchor for type II membrane protein" evidence="3">
    <location>
        <begin position="3"/>
        <end position="23"/>
    </location>
</feature>
<feature type="topological domain" description="Lumenal" evidence="3">
    <location>
        <begin position="24"/>
        <end position="329"/>
    </location>
</feature>
<feature type="region of interest" description="Disordered" evidence="4">
    <location>
        <begin position="45"/>
        <end position="87"/>
    </location>
</feature>
<feature type="region of interest" description="Interaction with galactose moiety of substrate glycoprotein" evidence="1">
    <location>
        <begin position="240"/>
        <end position="249"/>
    </location>
</feature>
<feature type="compositionally biased region" description="Basic and acidic residues" evidence="4">
    <location>
        <begin position="66"/>
        <end position="81"/>
    </location>
</feature>
<feature type="active site" description="Proton donor/acceptor" evidence="1">
    <location>
        <position position="279"/>
    </location>
</feature>
<feature type="binding site" evidence="1">
    <location>
        <begin position="93"/>
        <end position="95"/>
    </location>
    <ligand>
        <name>UDP-alpha-D-glucuronate</name>
        <dbReference type="ChEBI" id="CHEBI:58052"/>
    </ligand>
</feature>
<feature type="binding site" evidence="1">
    <location>
        <position position="124"/>
    </location>
    <ligand>
        <name>UDP-alpha-D-glucuronate</name>
        <dbReference type="ChEBI" id="CHEBI:58052"/>
    </ligand>
</feature>
<feature type="binding site" evidence="1">
    <location>
        <position position="161"/>
    </location>
    <ligand>
        <name>UDP-alpha-D-glucuronate</name>
        <dbReference type="ChEBI" id="CHEBI:58052"/>
    </ligand>
</feature>
<feature type="binding site" evidence="1">
    <location>
        <position position="166"/>
    </location>
    <ligand>
        <name>UDP-alpha-D-glucuronate</name>
        <dbReference type="ChEBI" id="CHEBI:58052"/>
    </ligand>
</feature>
<feature type="binding site" evidence="1">
    <location>
        <begin position="191"/>
        <end position="193"/>
    </location>
    <ligand>
        <name>UDP-alpha-D-glucuronate</name>
        <dbReference type="ChEBI" id="CHEBI:58052"/>
    </ligand>
</feature>
<feature type="binding site" evidence="1">
    <location>
        <position position="193"/>
    </location>
    <ligand>
        <name>Mn(2+)</name>
        <dbReference type="ChEBI" id="CHEBI:29035"/>
    </ligand>
</feature>
<feature type="binding site" evidence="1">
    <location>
        <begin position="306"/>
        <end position="308"/>
    </location>
    <ligand>
        <name>UDP-alpha-D-glucuronate</name>
        <dbReference type="ChEBI" id="CHEBI:58052"/>
    </ligand>
</feature>
<feature type="site" description="Interaction with galactose moiety of substrate glycoprotein" evidence="1">
    <location>
        <position position="224"/>
    </location>
</feature>
<feature type="site" description="Interaction with galactose moiety of substrate glycoprotein" evidence="1">
    <location>
        <position position="316"/>
    </location>
</feature>
<feature type="glycosylation site" description="N-linked (GlcNAc...) asparagine" evidence="3">
    <location>
        <position position="71"/>
    </location>
</feature>
<feature type="glycosylation site" description="N-linked (GlcNAc...) asparagine" evidence="3">
    <location>
        <position position="298"/>
    </location>
</feature>
<name>B3GA2_CANLF</name>
<keyword id="KW-0325">Glycoprotein</keyword>
<keyword id="KW-0333">Golgi apparatus</keyword>
<keyword id="KW-0464">Manganese</keyword>
<keyword id="KW-0472">Membrane</keyword>
<keyword id="KW-0479">Metal-binding</keyword>
<keyword id="KW-1185">Reference proteome</keyword>
<keyword id="KW-0735">Signal-anchor</keyword>
<keyword id="KW-0808">Transferase</keyword>
<keyword id="KW-0812">Transmembrane</keyword>
<keyword id="KW-1133">Transmembrane helix</keyword>
<proteinExistence type="evidence at transcript level"/>
<dbReference type="EC" id="2.4.1.135" evidence="2"/>
<dbReference type="EMBL" id="AJ888982">
    <property type="protein sequence ID" value="CAI62047.1"/>
    <property type="molecule type" value="mRNA"/>
</dbReference>
<dbReference type="RefSeq" id="NP_001013437.1">
    <property type="nucleotide sequence ID" value="NM_001013419.1"/>
</dbReference>
<dbReference type="SMR" id="Q5CAZ6"/>
<dbReference type="FunCoup" id="Q5CAZ6">
    <property type="interactions" value="7"/>
</dbReference>
<dbReference type="STRING" id="9615.ENSCAFP00000003803"/>
<dbReference type="CAZy" id="GT43">
    <property type="family name" value="Glycosyltransferase Family 43"/>
</dbReference>
<dbReference type="GlyCosmos" id="Q5CAZ6">
    <property type="glycosylation" value="2 sites, No reported glycans"/>
</dbReference>
<dbReference type="PaxDb" id="9612-ENSCAFP00000003803"/>
<dbReference type="Ensembl" id="ENSCAFT00000063225.2">
    <property type="protein sequence ID" value="ENSCAFP00000056904.2"/>
    <property type="gene ID" value="ENSCAFG00000002616.5"/>
</dbReference>
<dbReference type="Ensembl" id="ENSCAFT00030032834.1">
    <property type="protein sequence ID" value="ENSCAFP00030028641.1"/>
    <property type="gene ID" value="ENSCAFG00030017777.1"/>
</dbReference>
<dbReference type="Ensembl" id="ENSCAFT00845017711.1">
    <property type="protein sequence ID" value="ENSCAFP00845013793.1"/>
    <property type="gene ID" value="ENSCAFG00845010055.1"/>
</dbReference>
<dbReference type="GeneID" id="481875"/>
<dbReference type="KEGG" id="cfa:481875"/>
<dbReference type="CTD" id="135152"/>
<dbReference type="VEuPathDB" id="HostDB:ENSCAFG00845010055"/>
<dbReference type="VGNC" id="VGNC:38338">
    <property type="gene designation" value="B3GAT2"/>
</dbReference>
<dbReference type="eggNOG" id="KOG1476">
    <property type="taxonomic scope" value="Eukaryota"/>
</dbReference>
<dbReference type="GeneTree" id="ENSGT00940000159583"/>
<dbReference type="HOGENOM" id="CLU_045177_2_0_1"/>
<dbReference type="InParanoid" id="Q5CAZ6"/>
<dbReference type="OMA" id="RNVALAW"/>
<dbReference type="OrthoDB" id="675023at2759"/>
<dbReference type="TreeFam" id="TF313522"/>
<dbReference type="Reactome" id="R-CFA-1971475">
    <property type="pathway name" value="A tetrasaccharide linker sequence is required for GAG synthesis"/>
</dbReference>
<dbReference type="UniPathway" id="UPA00378"/>
<dbReference type="Proteomes" id="UP000002254">
    <property type="component" value="Chromosome 12"/>
</dbReference>
<dbReference type="Proteomes" id="UP000694429">
    <property type="component" value="Chromosome 12"/>
</dbReference>
<dbReference type="Proteomes" id="UP000694542">
    <property type="component" value="Unplaced"/>
</dbReference>
<dbReference type="Proteomes" id="UP000805418">
    <property type="component" value="Chromosome 12"/>
</dbReference>
<dbReference type="Bgee" id="ENSCAFG00000002616">
    <property type="expression patterns" value="Expressed in temporal lobe and 46 other cell types or tissues"/>
</dbReference>
<dbReference type="GO" id="GO:0000139">
    <property type="term" value="C:Golgi membrane"/>
    <property type="evidence" value="ECO:0000318"/>
    <property type="project" value="GO_Central"/>
</dbReference>
<dbReference type="GO" id="GO:0015018">
    <property type="term" value="F:galactosylgalactosylxylosylprotein 3-beta-glucuronosyltransferase activity"/>
    <property type="evidence" value="ECO:0000318"/>
    <property type="project" value="GO_Central"/>
</dbReference>
<dbReference type="GO" id="GO:0046872">
    <property type="term" value="F:metal ion binding"/>
    <property type="evidence" value="ECO:0007669"/>
    <property type="project" value="UniProtKB-KW"/>
</dbReference>
<dbReference type="GO" id="GO:0005975">
    <property type="term" value="P:carbohydrate metabolic process"/>
    <property type="evidence" value="ECO:0000318"/>
    <property type="project" value="GO_Central"/>
</dbReference>
<dbReference type="GO" id="GO:0050650">
    <property type="term" value="P:chondroitin sulfate proteoglycan biosynthetic process"/>
    <property type="evidence" value="ECO:0000318"/>
    <property type="project" value="GO_Central"/>
</dbReference>
<dbReference type="GO" id="GO:0006486">
    <property type="term" value="P:protein glycosylation"/>
    <property type="evidence" value="ECO:0007669"/>
    <property type="project" value="UniProtKB-UniPathway"/>
</dbReference>
<dbReference type="CDD" id="cd00218">
    <property type="entry name" value="GlcAT-I"/>
    <property type="match status" value="1"/>
</dbReference>
<dbReference type="FunFam" id="3.90.550.10:FF:000010">
    <property type="entry name" value="Galactosylgalactosylxylosylprotein 3-beta-glucuronosyltransferase"/>
    <property type="match status" value="1"/>
</dbReference>
<dbReference type="Gene3D" id="3.90.550.10">
    <property type="entry name" value="Spore Coat Polysaccharide Biosynthesis Protein SpsA, Chain A"/>
    <property type="match status" value="1"/>
</dbReference>
<dbReference type="InterPro" id="IPR005027">
    <property type="entry name" value="Glyco_trans_43"/>
</dbReference>
<dbReference type="InterPro" id="IPR029044">
    <property type="entry name" value="Nucleotide-diphossugar_trans"/>
</dbReference>
<dbReference type="PANTHER" id="PTHR10896:SF8">
    <property type="entry name" value="GALACTOSYLGALACTOSYLXYLOSYLPROTEIN 3-BETA-GLUCURONOSYLTRANSFERASE 2"/>
    <property type="match status" value="1"/>
</dbReference>
<dbReference type="PANTHER" id="PTHR10896">
    <property type="entry name" value="GALACTOSYLGALACTOSYLXYLOSYLPROTEIN 3-BETA-GLUCURONOSYLTRANSFERASE BETA-1,3-GLUCURONYLTRANSFERASE"/>
    <property type="match status" value="1"/>
</dbReference>
<dbReference type="Pfam" id="PF03360">
    <property type="entry name" value="Glyco_transf_43"/>
    <property type="match status" value="1"/>
</dbReference>
<dbReference type="SUPFAM" id="SSF53448">
    <property type="entry name" value="Nucleotide-diphospho-sugar transferases"/>
    <property type="match status" value="1"/>
</dbReference>
<reference key="1">
    <citation type="submission" date="2005-03" db="EMBL/GenBank/DDBJ databases">
        <title>Phylogeny of beta3-glucuronyltransferases.</title>
        <authorList>
            <person name="Ouzzine M."/>
            <person name="Magdalou J."/>
            <person name="Fournel-Gigleux S."/>
            <person name="Mollicone R."/>
            <person name="Oriol R."/>
        </authorList>
    </citation>
    <scope>NUCLEOTIDE SEQUENCE [MRNA]</scope>
</reference>
<gene>
    <name type="primary">B3GAT2</name>
</gene>
<protein>
    <recommendedName>
        <fullName>Galactosylgalactosylxylosylprotein 3-beta-glucuronosyltransferase 2</fullName>
        <ecNumber evidence="2">2.4.1.135</ecNumber>
    </recommendedName>
    <alternativeName>
        <fullName>Beta-1,3-glucuronyltransferase 2</fullName>
    </alternativeName>
    <alternativeName>
        <fullName>GlcAT-D</fullName>
    </alternativeName>
    <alternativeName>
        <fullName>UDP-glucuronosyltransferase S</fullName>
        <shortName>GlcAT-S</shortName>
        <shortName>Glucuronosyltransferase S</shortName>
    </alternativeName>
</protein>
<accession>Q5CAZ6</accession>
<comment type="function">
    <text evidence="2">Involved in the biosynthesis of L2/HNK-1 carbohydrate epitope on both glycolipids and glycoproteins.</text>
</comment>
<comment type="catalytic activity">
    <reaction evidence="2">
        <text>3-O-(beta-D-galactosyl-(1-&gt;3)-beta-D-galactosyl-(1-&gt;4)-beta-D-xylosyl)-L-seryl-[protein] + UDP-alpha-D-glucuronate = 3-O-(beta-D-GlcA-(1-&gt;3)-beta-D-Gal-(1-&gt;3)-beta-D-Gal-(1-&gt;4)-beta-D-Xyl)-L-seryl-[protein] + UDP + H(+)</text>
        <dbReference type="Rhea" id="RHEA:24168"/>
        <dbReference type="Rhea" id="RHEA-COMP:12571"/>
        <dbReference type="Rhea" id="RHEA-COMP:12573"/>
        <dbReference type="ChEBI" id="CHEBI:15378"/>
        <dbReference type="ChEBI" id="CHEBI:58052"/>
        <dbReference type="ChEBI" id="CHEBI:58223"/>
        <dbReference type="ChEBI" id="CHEBI:132090"/>
        <dbReference type="ChEBI" id="CHEBI:132093"/>
        <dbReference type="EC" id="2.4.1.135"/>
    </reaction>
</comment>
<comment type="cofactor">
    <cofactor evidence="2">
        <name>Mn(2+)</name>
        <dbReference type="ChEBI" id="CHEBI:29035"/>
    </cofactor>
</comment>
<comment type="pathway">
    <text>Protein modification; protein glycosylation.</text>
</comment>
<comment type="subunit">
    <text evidence="5">Homodimer.</text>
</comment>
<comment type="subcellular location">
    <subcellularLocation>
        <location evidence="1">Golgi apparatus membrane</location>
        <topology evidence="1">Single-pass type II membrane protein</topology>
    </subcellularLocation>
</comment>
<comment type="similarity">
    <text evidence="5">Belongs to the glycosyltransferase 43 family.</text>
</comment>
<sequence>MKSALFSRFFILLPWILIVIIMLDVDTRRPAPPLTPRPYFSPYAVGRGGARLPPRRGGPDSGPGRGWEKRNESRPHARPRPEPPLPTIYAITPTYSRPVQKAELTRLANTFRQVAQLHWILVEDAAARSELVSRFLARAGLPSTHLHVPTPRRYKRPGLPRATEQRNAGLAWLRQRHQHQRAQPGVLFFADDDNTYSLELFQEMRTTRKVSVWPVGLVGGRRYERPLVENGKVVGWYTGWRADRPFAIDMAGFAVSLQVILSNPKAVFKRRGSQPGMQESDFLKQITTVEELEPKANNCTKVLVWHTRTEKVNLANEPKYRLDTVKIEV</sequence>
<organism>
    <name type="scientific">Canis lupus familiaris</name>
    <name type="common">Dog</name>
    <name type="synonym">Canis familiaris</name>
    <dbReference type="NCBI Taxonomy" id="9615"/>
    <lineage>
        <taxon>Eukaryota</taxon>
        <taxon>Metazoa</taxon>
        <taxon>Chordata</taxon>
        <taxon>Craniata</taxon>
        <taxon>Vertebrata</taxon>
        <taxon>Euteleostomi</taxon>
        <taxon>Mammalia</taxon>
        <taxon>Eutheria</taxon>
        <taxon>Laurasiatheria</taxon>
        <taxon>Carnivora</taxon>
        <taxon>Caniformia</taxon>
        <taxon>Canidae</taxon>
        <taxon>Canis</taxon>
    </lineage>
</organism>